<accession>P41268</accession>
<reference key="1">
    <citation type="journal article" date="1995" name="Virus Res.">
        <title>Genetic variation of wild Puumala viruses within the serotype, local rodent populations and individual animal.</title>
        <authorList>
            <person name="Plyusnin A."/>
            <person name="Vapalahti O."/>
            <person name="Lehvaeslaiho H."/>
            <person name="Apekina N."/>
            <person name="Mikhailova T."/>
            <person name="Gavilovskaya I."/>
            <person name="Laakkonen J."/>
            <person name="Niemimaa J."/>
            <person name="Henttonen H."/>
            <person name="Brummer-Korvenkontio M."/>
            <person name="Vaheri A."/>
        </authorList>
    </citation>
    <scope>NUCLEOTIDE SEQUENCE [GENOMIC RNA]</scope>
</reference>
<comment type="function">
    <text evidence="1 2 5 8">Encapsidates the genome protecting it from nucleases (Probable). The encapsidated genomic RNA is termed the nucleocapsid (NC) and serves as template for transcription and replication (Probable). The nucleocapsid has a left-handed helical structure (By similarity). As a trimer, specifically binds and acts as a chaperone to unwind the panhandle structure formed by the viral RNA (vRNA) termini (By similarity). Involved in the transcription and replication initiation of vRNA by mediating primer annealing (By similarity). Plays a role in cap snatching by sequestering capped RNAs in P bodies for use by the viral RdRp during transcription initiation (By similarity). Substitutes for the cellular cap-binding complex (eIF4F) to preferentially facilitate the translation of capped mRNAs (By similarity). Initiates the translation by specifically binding to the cap and 40S ribosomal subunit (By similarity). Prevents the viral glycoprotein N (Gn) from autophagy-dependent breakdown maybe by blocking autophagosome formation (By similarity). Inhibits host EIF2AK2/PKR dimerization to prevent PKR-induced translational shutdown in cells and thus the activation of the antiviral state (By similarity). Also displays sequence-unspecific DNA endonuclease activity (By similarity).</text>
</comment>
<comment type="subunit">
    <text evidence="2 3 4 5">Homotrimer (By similarity). Homomultimer (By similarity). Homomultimerizes and binds to viral genomic RNA to form the nucleocapsid (By similarity). Interacts with host MAP1LC3B; this interaction participates to the protection of Gn from virus-triggered autophagy (By similarity). Interacts with host SNAP29; this interaction participates to the protection of glycoprotein N from virus-triggered autophagy (By similarity). Interacts (via N-terminus) with host RPS19; this interaction probably mediates the loading of the 40S ribosomal subunit on viral capped mRNA during N-mediated translation initiation (By similarity). Interacts with the viral RdRp (By similarity). Interacts with host SUMO1 (via N-terminus) (By similarity). Interacts with host DAXX (By similarity). Interacts with the viral glycoprotein N (via C-terminus) (By similarity). Interacts with the viral glycoprotein C (via C-terminus) (By similarity).</text>
</comment>
<comment type="subcellular location">
    <subcellularLocation>
        <location evidence="2">Virion</location>
    </subcellularLocation>
    <subcellularLocation>
        <location evidence="2">Host cytoplasm</location>
        <location evidence="2">Host perinuclear region</location>
    </subcellularLocation>
    <subcellularLocation>
        <location evidence="2">Host Golgi apparatus</location>
        <location evidence="2">Host cis-Golgi network</location>
    </subcellularLocation>
    <text evidence="2">Internal protein of virus particle.</text>
</comment>
<comment type="domain">
    <text evidence="2 5">The N-terminus is required for chaperone activity and, in trimeric form, this region likely serves in high affinity vRNA panhandle recognition (By similarity). The N-terminus also contains a coiled coil region, which probably participates in but is insufficient to initiate N trimerization (By similarity). The YxxL motif is indispensable for the interaction with host MAP1LC3B (By similarity). The central region is involved in specific RNA-binding (By similarity). Has distinct cap- and RNA-binding sites so it can bind simultaneously both the vRNA and mRNA cap (By similarity).</text>
</comment>
<comment type="similarity">
    <text evidence="8">Belongs to the hantavirus nucleocapsid protein family.</text>
</comment>
<dbReference type="EC" id="3.1.-.-" evidence="5"/>
<dbReference type="EMBL" id="Z30703">
    <property type="protein sequence ID" value="CAA83188.1"/>
    <property type="molecule type" value="Genomic_RNA"/>
</dbReference>
<dbReference type="EMBL" id="Z30702">
    <property type="protein sequence ID" value="CAA83187.1"/>
    <property type="molecule type" value="Genomic_RNA"/>
</dbReference>
<dbReference type="PIR" id="S43008">
    <property type="entry name" value="S43008"/>
</dbReference>
<dbReference type="SMR" id="P41268"/>
<dbReference type="GO" id="GO:0019029">
    <property type="term" value="C:helical viral capsid"/>
    <property type="evidence" value="ECO:0007669"/>
    <property type="project" value="UniProtKB-KW"/>
</dbReference>
<dbReference type="GO" id="GO:0044177">
    <property type="term" value="C:host cell Golgi apparatus"/>
    <property type="evidence" value="ECO:0007669"/>
    <property type="project" value="UniProtKB-SubCell"/>
</dbReference>
<dbReference type="GO" id="GO:0044220">
    <property type="term" value="C:host cell perinuclear region of cytoplasm"/>
    <property type="evidence" value="ECO:0007669"/>
    <property type="project" value="UniProtKB-SubCell"/>
</dbReference>
<dbReference type="GO" id="GO:1990904">
    <property type="term" value="C:ribonucleoprotein complex"/>
    <property type="evidence" value="ECO:0007669"/>
    <property type="project" value="UniProtKB-KW"/>
</dbReference>
<dbReference type="GO" id="GO:0019013">
    <property type="term" value="C:viral nucleocapsid"/>
    <property type="evidence" value="ECO:0007669"/>
    <property type="project" value="UniProtKB-KW"/>
</dbReference>
<dbReference type="GO" id="GO:0004519">
    <property type="term" value="F:endonuclease activity"/>
    <property type="evidence" value="ECO:0007669"/>
    <property type="project" value="UniProtKB-KW"/>
</dbReference>
<dbReference type="GO" id="GO:0003723">
    <property type="term" value="F:RNA binding"/>
    <property type="evidence" value="ECO:0007669"/>
    <property type="project" value="UniProtKB-KW"/>
</dbReference>
<dbReference type="Gene3D" id="1.20.58.90">
    <property type="match status" value="1"/>
</dbReference>
<dbReference type="InterPro" id="IPR002214">
    <property type="entry name" value="Hanta_nucleocap"/>
</dbReference>
<dbReference type="Pfam" id="PF00846">
    <property type="entry name" value="Hanta_nucleocap"/>
    <property type="match status" value="1"/>
</dbReference>
<dbReference type="PIRSF" id="PIRSF003949">
    <property type="entry name" value="N_HantaV"/>
    <property type="match status" value="1"/>
</dbReference>
<protein>
    <recommendedName>
        <fullName>Nucleoprotein</fullName>
        <ecNumber evidence="5">3.1.-.-</ecNumber>
    </recommendedName>
    <alternativeName>
        <fullName>Nucleocapsid protein</fullName>
        <shortName>Protein N</shortName>
    </alternativeName>
</protein>
<keyword id="KW-0167">Capsid protein</keyword>
<keyword id="KW-0143">Chaperone</keyword>
<keyword id="KW-0175">Coiled coil</keyword>
<keyword id="KW-0255">Endonuclease</keyword>
<keyword id="KW-1139">Helical capsid protein</keyword>
<keyword id="KW-1035">Host cytoplasm</keyword>
<keyword id="KW-1040">Host Golgi apparatus</keyword>
<keyword id="KW-0378">Hydrolase</keyword>
<keyword id="KW-0540">Nuclease</keyword>
<keyword id="KW-0687">Ribonucleoprotein</keyword>
<keyword id="KW-0694">RNA-binding</keyword>
<keyword id="KW-0543">Viral nucleoprotein</keyword>
<keyword id="KW-0946">Virion</keyword>
<name>NCAP_PUUME</name>
<proteinExistence type="inferred from homology"/>
<organism>
    <name type="scientific">Puumala virus (strain Evo/12CG/93)</name>
    <dbReference type="NCBI Taxonomy" id="38999"/>
    <lineage>
        <taxon>Viruses</taxon>
        <taxon>Riboviria</taxon>
        <taxon>Orthornavirae</taxon>
        <taxon>Negarnaviricota</taxon>
        <taxon>Polyploviricotina</taxon>
        <taxon>Ellioviricetes</taxon>
        <taxon>Bunyavirales</taxon>
        <taxon>Hantaviridae</taxon>
        <taxon>Mammantavirinae</taxon>
        <taxon>Orthohantavirus</taxon>
        <taxon>Orthohantavirus puumalaense</taxon>
    </lineage>
</organism>
<gene>
    <name type="primary">N</name>
</gene>
<organismHost>
    <name type="scientific">Homo sapiens</name>
    <name type="common">Human</name>
    <dbReference type="NCBI Taxonomy" id="9606"/>
</organismHost>
<organismHost>
    <name type="scientific">Myodes glareolus</name>
    <name type="common">Bank vole</name>
    <name type="synonym">Clethrionomys glareolus</name>
    <dbReference type="NCBI Taxonomy" id="447135"/>
</organismHost>
<sequence>MSDLTDIQEDITRHEQQLVVARQKLKDAERAVEVDPDDVNKNTLQARQQTVSALEDKLADYKRRMADAVSRKKMDTKPTDPTGIEPDDHLKERSSLRYGNVLDVNAIDIEEPSGQTADWYTIGVYVIGFTIPIILKALYMLSTRGRQTVKENKGTRIRFKDDTSFEDINGIRRPKHLYVSMPTAQSTMKAEELTPGRFRTIVCGLFPTQIQVRNIMSPVMGVIGFSFFVKDWPERIREFMEKECPFIKPEIKPGTPAQEMEMLKRNKIYFMQRQDVLDKNHVADIDKLIDYAASGDPTSPDNIDSPNAPWVFACAPDRCPPTCIYVAGMAELGAFFSILQDMRNTIMASKTVGTAEEKLRKKSSFYQSYLRRTQSMGIQLDQRIILLFMLEWGKEMVDHFHLGDDMDPELRGLAQALIDQKVKEISNQEPLKI</sequence>
<evidence type="ECO:0000250" key="1">
    <source>
        <dbReference type="UniProtKB" id="O36307"/>
    </source>
</evidence>
<evidence type="ECO:0000250" key="2">
    <source>
        <dbReference type="UniProtKB" id="P05133"/>
    </source>
</evidence>
<evidence type="ECO:0000250" key="3">
    <source>
        <dbReference type="UniProtKB" id="P27313"/>
    </source>
</evidence>
<evidence type="ECO:0000250" key="4">
    <source>
        <dbReference type="UniProtKB" id="Q88918"/>
    </source>
</evidence>
<evidence type="ECO:0000250" key="5">
    <source>
        <dbReference type="UniProtKB" id="Q89462"/>
    </source>
</evidence>
<evidence type="ECO:0000255" key="6"/>
<evidence type="ECO:0000256" key="7">
    <source>
        <dbReference type="SAM" id="MobiDB-lite"/>
    </source>
</evidence>
<evidence type="ECO:0000305" key="8"/>
<feature type="chain" id="PRO_0000222012" description="Nucleoprotein">
    <location>
        <begin position="1"/>
        <end position="433"/>
    </location>
</feature>
<feature type="region of interest" description="Viral panhandle binding" evidence="5">
    <location>
        <begin position="1"/>
        <end position="175"/>
    </location>
</feature>
<feature type="region of interest" description="Chaperone activity" evidence="5">
    <location>
        <begin position="1"/>
        <end position="100"/>
    </location>
</feature>
<feature type="region of interest" description="Homomultimerization" evidence="4">
    <location>
        <begin position="1"/>
        <end position="79"/>
    </location>
</feature>
<feature type="region of interest" description="RdRP binding" evidence="5">
    <location>
        <begin position="1"/>
        <end position="50"/>
    </location>
</feature>
<feature type="region of interest" description="Disordered" evidence="7">
    <location>
        <begin position="67"/>
        <end position="91"/>
    </location>
</feature>
<feature type="region of interest" description="Interaction with glycoprotein N" evidence="4">
    <location>
        <begin position="80"/>
        <end position="248"/>
    </location>
</feature>
<feature type="region of interest" description="Homomultimerization" evidence="2">
    <location>
        <begin position="100"/>
        <end position="125"/>
    </location>
</feature>
<feature type="region of interest" description="Interaction with host RPS19" evidence="5">
    <location>
        <begin position="150"/>
        <end position="175"/>
    </location>
</feature>
<feature type="region of interest" description="Viral RNA-binding" evidence="2">
    <location>
        <begin position="175"/>
        <end position="217"/>
    </location>
</feature>
<feature type="region of interest" description="Interaction with host UBE2I/UBC9" evidence="2">
    <location>
        <begin position="188"/>
        <end position="191"/>
    </location>
</feature>
<feature type="region of interest" description="Interaction with host DAXX" evidence="3">
    <location>
        <begin position="377"/>
        <end position="433"/>
    </location>
</feature>
<feature type="region of interest" description="Homomultimerization" evidence="4">
    <location>
        <begin position="377"/>
        <end position="425"/>
    </location>
</feature>
<feature type="coiled-coil region" evidence="6">
    <location>
        <begin position="4"/>
        <end position="71"/>
    </location>
</feature>
<feature type="short sequence motif" description="YxxL" evidence="2">
    <location>
        <begin position="178"/>
        <end position="181"/>
    </location>
</feature>
<feature type="compositionally biased region" description="Basic and acidic residues" evidence="7">
    <location>
        <begin position="67"/>
        <end position="78"/>
    </location>
</feature>
<feature type="site" description="Important for the endonuclease activity" evidence="5">
    <location>
        <position position="88"/>
    </location>
</feature>
<feature type="site" description="Important for the endonuclease activity" evidence="5">
    <location>
        <position position="103"/>
    </location>
</feature>